<proteinExistence type="inferred from homology"/>
<accession>B8IZM4</accession>
<organism>
    <name type="scientific">Desulfovibrio desulfuricans (strain ATCC 27774 / DSM 6949 / MB)</name>
    <dbReference type="NCBI Taxonomy" id="525146"/>
    <lineage>
        <taxon>Bacteria</taxon>
        <taxon>Pseudomonadati</taxon>
        <taxon>Thermodesulfobacteriota</taxon>
        <taxon>Desulfovibrionia</taxon>
        <taxon>Desulfovibrionales</taxon>
        <taxon>Desulfovibrionaceae</taxon>
        <taxon>Desulfovibrio</taxon>
    </lineage>
</organism>
<dbReference type="EMBL" id="CP001358">
    <property type="protein sequence ID" value="ACL48951.1"/>
    <property type="molecule type" value="Genomic_DNA"/>
</dbReference>
<dbReference type="SMR" id="B8IZM4"/>
<dbReference type="STRING" id="525146.Ddes_1044"/>
<dbReference type="KEGG" id="dds:Ddes_1044"/>
<dbReference type="eggNOG" id="COG0782">
    <property type="taxonomic scope" value="Bacteria"/>
</dbReference>
<dbReference type="HOGENOM" id="CLU_101379_2_0_7"/>
<dbReference type="GO" id="GO:0003677">
    <property type="term" value="F:DNA binding"/>
    <property type="evidence" value="ECO:0007669"/>
    <property type="project" value="UniProtKB-UniRule"/>
</dbReference>
<dbReference type="GO" id="GO:0070063">
    <property type="term" value="F:RNA polymerase binding"/>
    <property type="evidence" value="ECO:0007669"/>
    <property type="project" value="InterPro"/>
</dbReference>
<dbReference type="GO" id="GO:0006354">
    <property type="term" value="P:DNA-templated transcription elongation"/>
    <property type="evidence" value="ECO:0007669"/>
    <property type="project" value="TreeGrafter"/>
</dbReference>
<dbReference type="GO" id="GO:0032784">
    <property type="term" value="P:regulation of DNA-templated transcription elongation"/>
    <property type="evidence" value="ECO:0007669"/>
    <property type="project" value="UniProtKB-UniRule"/>
</dbReference>
<dbReference type="FunFam" id="1.10.287.180:FF:000001">
    <property type="entry name" value="Transcription elongation factor GreA"/>
    <property type="match status" value="1"/>
</dbReference>
<dbReference type="FunFam" id="3.10.50.30:FF:000001">
    <property type="entry name" value="Transcription elongation factor GreA"/>
    <property type="match status" value="1"/>
</dbReference>
<dbReference type="Gene3D" id="3.10.50.30">
    <property type="entry name" value="Transcription elongation factor, GreA/GreB, C-terminal domain"/>
    <property type="match status" value="1"/>
</dbReference>
<dbReference type="Gene3D" id="1.10.287.180">
    <property type="entry name" value="Transcription elongation factor, GreA/GreB, N-terminal domain"/>
    <property type="match status" value="1"/>
</dbReference>
<dbReference type="HAMAP" id="MF_00105">
    <property type="entry name" value="GreA_GreB"/>
    <property type="match status" value="1"/>
</dbReference>
<dbReference type="InterPro" id="IPR036953">
    <property type="entry name" value="GreA/GreB_C_sf"/>
</dbReference>
<dbReference type="InterPro" id="IPR018151">
    <property type="entry name" value="TF_GreA/GreB_CS"/>
</dbReference>
<dbReference type="InterPro" id="IPR006359">
    <property type="entry name" value="Tscrpt_elong_fac_GreA"/>
</dbReference>
<dbReference type="InterPro" id="IPR028624">
    <property type="entry name" value="Tscrpt_elong_fac_GreA/B"/>
</dbReference>
<dbReference type="InterPro" id="IPR001437">
    <property type="entry name" value="Tscrpt_elong_fac_GreA/B_C"/>
</dbReference>
<dbReference type="InterPro" id="IPR023459">
    <property type="entry name" value="Tscrpt_elong_fac_GreA/B_fam"/>
</dbReference>
<dbReference type="InterPro" id="IPR022691">
    <property type="entry name" value="Tscrpt_elong_fac_GreA/B_N"/>
</dbReference>
<dbReference type="InterPro" id="IPR036805">
    <property type="entry name" value="Tscrpt_elong_fac_GreA/B_N_sf"/>
</dbReference>
<dbReference type="NCBIfam" id="TIGR01462">
    <property type="entry name" value="greA"/>
    <property type="match status" value="1"/>
</dbReference>
<dbReference type="NCBIfam" id="NF001261">
    <property type="entry name" value="PRK00226.1-2"/>
    <property type="match status" value="1"/>
</dbReference>
<dbReference type="NCBIfam" id="NF001263">
    <property type="entry name" value="PRK00226.1-4"/>
    <property type="match status" value="1"/>
</dbReference>
<dbReference type="NCBIfam" id="NF001264">
    <property type="entry name" value="PRK00226.1-5"/>
    <property type="match status" value="1"/>
</dbReference>
<dbReference type="PANTHER" id="PTHR30437">
    <property type="entry name" value="TRANSCRIPTION ELONGATION FACTOR GREA"/>
    <property type="match status" value="1"/>
</dbReference>
<dbReference type="PANTHER" id="PTHR30437:SF4">
    <property type="entry name" value="TRANSCRIPTION ELONGATION FACTOR GREA"/>
    <property type="match status" value="1"/>
</dbReference>
<dbReference type="Pfam" id="PF01272">
    <property type="entry name" value="GreA_GreB"/>
    <property type="match status" value="1"/>
</dbReference>
<dbReference type="Pfam" id="PF03449">
    <property type="entry name" value="GreA_GreB_N"/>
    <property type="match status" value="1"/>
</dbReference>
<dbReference type="PIRSF" id="PIRSF006092">
    <property type="entry name" value="GreA_GreB"/>
    <property type="match status" value="1"/>
</dbReference>
<dbReference type="SUPFAM" id="SSF54534">
    <property type="entry name" value="FKBP-like"/>
    <property type="match status" value="1"/>
</dbReference>
<dbReference type="SUPFAM" id="SSF46557">
    <property type="entry name" value="GreA transcript cleavage protein, N-terminal domain"/>
    <property type="match status" value="1"/>
</dbReference>
<dbReference type="PROSITE" id="PS00829">
    <property type="entry name" value="GREAB_1"/>
    <property type="match status" value="1"/>
</dbReference>
<dbReference type="PROSITE" id="PS00830">
    <property type="entry name" value="GREAB_2"/>
    <property type="match status" value="1"/>
</dbReference>
<name>GREA_DESDA</name>
<reference key="1">
    <citation type="submission" date="2009-01" db="EMBL/GenBank/DDBJ databases">
        <title>Complete sequence of Desulfovibrio desulfuricans subsp. desulfuricans str. ATCC 27774.</title>
        <authorList>
            <consortium name="US DOE Joint Genome Institute"/>
            <person name="Lucas S."/>
            <person name="Copeland A."/>
            <person name="Lapidus A."/>
            <person name="Glavina del Rio T."/>
            <person name="Tice H."/>
            <person name="Bruce D."/>
            <person name="Goodwin L."/>
            <person name="Pitluck S."/>
            <person name="Sims D."/>
            <person name="Lu M."/>
            <person name="Kiss H."/>
            <person name="Meineke L."/>
            <person name="Brettin T."/>
            <person name="Detter J.C."/>
            <person name="Han C."/>
            <person name="Larimer F."/>
            <person name="Land M."/>
            <person name="Hauser L."/>
            <person name="Kyrpides N."/>
            <person name="Ovchinnikova G."/>
            <person name="Hazen T.C."/>
        </authorList>
    </citation>
    <scope>NUCLEOTIDE SEQUENCE [LARGE SCALE GENOMIC DNA]</scope>
    <source>
        <strain>ATCC 27774 / DSM 6949 / MB</strain>
    </source>
</reference>
<comment type="function">
    <text evidence="1">Necessary for efficient RNA polymerase transcription elongation past template-encoded arresting sites. The arresting sites in DNA have the property of trapping a certain fraction of elongating RNA polymerases that pass through, resulting in locked ternary complexes. Cleavage of the nascent transcript by cleavage factors such as GreA or GreB allows the resumption of elongation from the new 3'terminus. GreA releases sequences of 2 to 3 nucleotides.</text>
</comment>
<comment type="similarity">
    <text evidence="1">Belongs to the GreA/GreB family.</text>
</comment>
<sequence>MTSIPISVQGYKALEEELARLKSERPEIIQAIKEAREEGDLRENAGYDAARERQGMAEARIKYIESRMALYQVIDLDTLSGDKVIFGATVDLEDVDSGEAKTYTILGPDEADPSKGSISFLSPVGQALLGREEGDEVSVEIPRGRVTYEIIGVSFKGSKNLG</sequence>
<feature type="chain" id="PRO_1000118959" description="Transcription elongation factor GreA">
    <location>
        <begin position="1"/>
        <end position="162"/>
    </location>
</feature>
<feature type="coiled-coil region" evidence="1">
    <location>
        <begin position="9"/>
        <end position="38"/>
    </location>
</feature>
<keyword id="KW-0175">Coiled coil</keyword>
<keyword id="KW-0238">DNA-binding</keyword>
<keyword id="KW-0804">Transcription</keyword>
<keyword id="KW-0805">Transcription regulation</keyword>
<protein>
    <recommendedName>
        <fullName evidence="1">Transcription elongation factor GreA</fullName>
    </recommendedName>
    <alternativeName>
        <fullName evidence="1">Transcript cleavage factor GreA</fullName>
    </alternativeName>
</protein>
<evidence type="ECO:0000255" key="1">
    <source>
        <dbReference type="HAMAP-Rule" id="MF_00105"/>
    </source>
</evidence>
<gene>
    <name evidence="1" type="primary">greA</name>
    <name type="ordered locus">Ddes_1044</name>
</gene>